<accession>Q7XZP5</accession>
<accession>O65634</accession>
<gene>
    <name type="primary">APX5</name>
    <name type="ordered locus">At4g35970</name>
    <name type="ORF">F4B14_240</name>
    <name type="ORF">T19K4.100</name>
</gene>
<name>APX5_ARATH</name>
<proteinExistence type="evidence at protein level"/>
<dbReference type="EC" id="1.11.1.11"/>
<dbReference type="EMBL" id="AL022373">
    <property type="protein sequence ID" value="CAA18491.1"/>
    <property type="molecule type" value="Genomic_DNA"/>
</dbReference>
<dbReference type="EMBL" id="AL031986">
    <property type="protein sequence ID" value="CAA21483.1"/>
    <property type="molecule type" value="Genomic_DNA"/>
</dbReference>
<dbReference type="EMBL" id="AL161588">
    <property type="protein sequence ID" value="CAB81506.1"/>
    <property type="molecule type" value="Genomic_DNA"/>
</dbReference>
<dbReference type="EMBL" id="CP002687">
    <property type="protein sequence ID" value="AEE86596.1"/>
    <property type="molecule type" value="Genomic_DNA"/>
</dbReference>
<dbReference type="EMBL" id="AK119023">
    <property type="protein sequence ID" value="BAC43599.1"/>
    <property type="molecule type" value="mRNA"/>
</dbReference>
<dbReference type="EMBL" id="BT006053">
    <property type="protein sequence ID" value="AAP04038.1"/>
    <property type="molecule type" value="mRNA"/>
</dbReference>
<dbReference type="EMBL" id="AF441714">
    <property type="protein sequence ID" value="AAP72144.1"/>
    <property type="molecule type" value="mRNA"/>
</dbReference>
<dbReference type="PIR" id="T04707">
    <property type="entry name" value="T04707"/>
</dbReference>
<dbReference type="RefSeq" id="NP_195321.1">
    <property type="nucleotide sequence ID" value="NM_119763.3"/>
</dbReference>
<dbReference type="SMR" id="Q7XZP5"/>
<dbReference type="BioGRID" id="15033">
    <property type="interactions" value="2"/>
</dbReference>
<dbReference type="FunCoup" id="Q7XZP5">
    <property type="interactions" value="318"/>
</dbReference>
<dbReference type="STRING" id="3702.Q7XZP5"/>
<dbReference type="PeroxiBase" id="1887">
    <property type="entry name" value="AtAPx04"/>
</dbReference>
<dbReference type="PaxDb" id="3702-AT4G35970.1"/>
<dbReference type="ProteomicsDB" id="240887"/>
<dbReference type="EnsemblPlants" id="AT4G35970.1">
    <property type="protein sequence ID" value="AT4G35970.1"/>
    <property type="gene ID" value="AT4G35970"/>
</dbReference>
<dbReference type="GeneID" id="829751"/>
<dbReference type="Gramene" id="AT4G35970.1">
    <property type="protein sequence ID" value="AT4G35970.1"/>
    <property type="gene ID" value="AT4G35970"/>
</dbReference>
<dbReference type="KEGG" id="ath:AT4G35970"/>
<dbReference type="Araport" id="AT4G35970"/>
<dbReference type="TAIR" id="AT4G35970">
    <property type="gene designation" value="APX5"/>
</dbReference>
<dbReference type="eggNOG" id="ENOG502QR1E">
    <property type="taxonomic scope" value="Eukaryota"/>
</dbReference>
<dbReference type="HOGENOM" id="CLU_036959_3_0_1"/>
<dbReference type="InParanoid" id="Q7XZP5"/>
<dbReference type="OMA" id="CNLPRRT"/>
<dbReference type="OrthoDB" id="2859658at2759"/>
<dbReference type="PhylomeDB" id="Q7XZP5"/>
<dbReference type="BioCyc" id="ARA:AT4G35970-MONOMER"/>
<dbReference type="PRO" id="PR:Q7XZP5"/>
<dbReference type="Proteomes" id="UP000006548">
    <property type="component" value="Chromosome 4"/>
</dbReference>
<dbReference type="ExpressionAtlas" id="Q7XZP5">
    <property type="expression patterns" value="baseline and differential"/>
</dbReference>
<dbReference type="GO" id="GO:0009507">
    <property type="term" value="C:chloroplast"/>
    <property type="evidence" value="ECO:0000314"/>
    <property type="project" value="TAIR"/>
</dbReference>
<dbReference type="GO" id="GO:0005739">
    <property type="term" value="C:mitochondrion"/>
    <property type="evidence" value="ECO:0000314"/>
    <property type="project" value="TAIR"/>
</dbReference>
<dbReference type="GO" id="GO:0005778">
    <property type="term" value="C:peroxisomal membrane"/>
    <property type="evidence" value="ECO:0007669"/>
    <property type="project" value="UniProtKB-SubCell"/>
</dbReference>
<dbReference type="GO" id="GO:0005777">
    <property type="term" value="C:peroxisome"/>
    <property type="evidence" value="ECO:0000314"/>
    <property type="project" value="TAIR"/>
</dbReference>
<dbReference type="GO" id="GO:0005886">
    <property type="term" value="C:plasma membrane"/>
    <property type="evidence" value="ECO:0007005"/>
    <property type="project" value="TAIR"/>
</dbReference>
<dbReference type="GO" id="GO:0020037">
    <property type="term" value="F:heme binding"/>
    <property type="evidence" value="ECO:0007669"/>
    <property type="project" value="InterPro"/>
</dbReference>
<dbReference type="GO" id="GO:0016688">
    <property type="term" value="F:L-ascorbate peroxidase activity"/>
    <property type="evidence" value="ECO:0007669"/>
    <property type="project" value="UniProtKB-EC"/>
</dbReference>
<dbReference type="GO" id="GO:0046872">
    <property type="term" value="F:metal ion binding"/>
    <property type="evidence" value="ECO:0007669"/>
    <property type="project" value="UniProtKB-KW"/>
</dbReference>
<dbReference type="GO" id="GO:0034599">
    <property type="term" value="P:cellular response to oxidative stress"/>
    <property type="evidence" value="ECO:0007669"/>
    <property type="project" value="InterPro"/>
</dbReference>
<dbReference type="GO" id="GO:0042744">
    <property type="term" value="P:hydrogen peroxide catabolic process"/>
    <property type="evidence" value="ECO:0007669"/>
    <property type="project" value="UniProtKB-KW"/>
</dbReference>
<dbReference type="CDD" id="cd00691">
    <property type="entry name" value="ascorbate_peroxidase"/>
    <property type="match status" value="1"/>
</dbReference>
<dbReference type="FunFam" id="1.10.520.10:FF:000003">
    <property type="entry name" value="Cytosolic ascorbate peroxidase"/>
    <property type="match status" value="1"/>
</dbReference>
<dbReference type="FunFam" id="1.10.420.10:FF:000003">
    <property type="entry name" value="L-ascorbate peroxidase, cytosolic"/>
    <property type="match status" value="1"/>
</dbReference>
<dbReference type="Gene3D" id="1.10.520.10">
    <property type="match status" value="1"/>
</dbReference>
<dbReference type="Gene3D" id="1.10.420.10">
    <property type="entry name" value="Peroxidase, domain 2"/>
    <property type="match status" value="1"/>
</dbReference>
<dbReference type="InterPro" id="IPR044831">
    <property type="entry name" value="Ccp1-like"/>
</dbReference>
<dbReference type="InterPro" id="IPR002016">
    <property type="entry name" value="Haem_peroxidase"/>
</dbReference>
<dbReference type="InterPro" id="IPR010255">
    <property type="entry name" value="Haem_peroxidase_sf"/>
</dbReference>
<dbReference type="InterPro" id="IPR002207">
    <property type="entry name" value="Peroxidase_I"/>
</dbReference>
<dbReference type="InterPro" id="IPR019794">
    <property type="entry name" value="Peroxidases_AS"/>
</dbReference>
<dbReference type="InterPro" id="IPR019793">
    <property type="entry name" value="Peroxidases_heam-ligand_BS"/>
</dbReference>
<dbReference type="PANTHER" id="PTHR31356:SF38">
    <property type="entry name" value="L-ASCORBATE PEROXIDASE 5, PEROXISOMAL"/>
    <property type="match status" value="1"/>
</dbReference>
<dbReference type="PANTHER" id="PTHR31356">
    <property type="entry name" value="THYLAKOID LUMENAL 29 KDA PROTEIN, CHLOROPLASTIC-RELATED"/>
    <property type="match status" value="1"/>
</dbReference>
<dbReference type="Pfam" id="PF00141">
    <property type="entry name" value="peroxidase"/>
    <property type="match status" value="1"/>
</dbReference>
<dbReference type="PRINTS" id="PR00459">
    <property type="entry name" value="ASPEROXIDASE"/>
</dbReference>
<dbReference type="PRINTS" id="PR00458">
    <property type="entry name" value="PEROXIDASE"/>
</dbReference>
<dbReference type="SUPFAM" id="SSF48113">
    <property type="entry name" value="Heme-dependent peroxidases"/>
    <property type="match status" value="1"/>
</dbReference>
<dbReference type="PROSITE" id="PS00435">
    <property type="entry name" value="PEROXIDASE_1"/>
    <property type="match status" value="1"/>
</dbReference>
<dbReference type="PROSITE" id="PS00436">
    <property type="entry name" value="PEROXIDASE_2"/>
    <property type="match status" value="1"/>
</dbReference>
<dbReference type="PROSITE" id="PS50873">
    <property type="entry name" value="PEROXIDASE_4"/>
    <property type="match status" value="1"/>
</dbReference>
<comment type="function">
    <text evidence="1">Plays a key role in hydrogen peroxide removal.</text>
</comment>
<comment type="catalytic activity">
    <reaction>
        <text>L-ascorbate + H2O2 = L-dehydroascorbate + 2 H2O</text>
        <dbReference type="Rhea" id="RHEA:22996"/>
        <dbReference type="ChEBI" id="CHEBI:15377"/>
        <dbReference type="ChEBI" id="CHEBI:16240"/>
        <dbReference type="ChEBI" id="CHEBI:38290"/>
        <dbReference type="ChEBI" id="CHEBI:58539"/>
        <dbReference type="EC" id="1.11.1.11"/>
    </reaction>
</comment>
<comment type="cofactor">
    <cofactor>
        <name>heme b</name>
        <dbReference type="ChEBI" id="CHEBI:60344"/>
    </cofactor>
    <text>Binds 1 heme b (iron(II)-protoporphyrin IX) group per subunit.</text>
</comment>
<comment type="subunit">
    <text evidence="6">Interacts with AKR2A and AKR2B.</text>
</comment>
<comment type="subcellular location">
    <subcellularLocation>
        <location evidence="7">Peroxisome membrane</location>
        <topology evidence="7">Single-pass membrane protein</topology>
    </subcellularLocation>
</comment>
<comment type="miscellaneous">
    <text evidence="1">Binds one cation per subunit; probably K(+), but might also be Ca(2+).</text>
</comment>
<comment type="similarity">
    <text evidence="7">Belongs to the peroxidase family. Ascorbate peroxidase subfamily.</text>
</comment>
<feature type="transit peptide" description="Peroxisome" evidence="2">
    <location>
        <begin position="1"/>
        <end status="unknown"/>
    </location>
</feature>
<feature type="chain" id="PRO_0000261324" description="L-ascorbate peroxidase 5, peroxisomal">
    <location>
        <begin status="unknown"/>
        <end position="279"/>
    </location>
</feature>
<feature type="transmembrane region" description="Helical" evidence="2">
    <location>
        <begin position="251"/>
        <end position="271"/>
    </location>
</feature>
<feature type="region of interest" description="Disordered" evidence="5">
    <location>
        <begin position="111"/>
        <end position="134"/>
    </location>
</feature>
<feature type="short sequence motif" description="AKR2A-binding sequence (ABS) required for peroxisome membrane targeting" evidence="6">
    <location>
        <begin position="272"/>
        <end position="279"/>
    </location>
</feature>
<feature type="active site" description="Proton acceptor" evidence="3 4">
    <location>
        <position position="39"/>
    </location>
</feature>
<feature type="binding site" description="axial binding residue" evidence="3">
    <location>
        <position position="158"/>
    </location>
    <ligand>
        <name>heme b</name>
        <dbReference type="ChEBI" id="CHEBI:60344"/>
    </ligand>
    <ligandPart>
        <name>Fe</name>
        <dbReference type="ChEBI" id="CHEBI:18248"/>
    </ligandPart>
</feature>
<feature type="binding site" evidence="1">
    <location>
        <position position="159"/>
    </location>
    <ligand>
        <name>K(+)</name>
        <dbReference type="ChEBI" id="CHEBI:29103"/>
    </ligand>
</feature>
<feature type="binding site" evidence="1">
    <location>
        <position position="175"/>
    </location>
    <ligand>
        <name>K(+)</name>
        <dbReference type="ChEBI" id="CHEBI:29103"/>
    </ligand>
</feature>
<feature type="binding site" evidence="1">
    <location>
        <position position="182"/>
    </location>
    <ligand>
        <name>K(+)</name>
        <dbReference type="ChEBI" id="CHEBI:29103"/>
    </ligand>
</feature>
<feature type="site" description="Transition state stabilizer" evidence="3">
    <location>
        <position position="35"/>
    </location>
</feature>
<keyword id="KW-0106">Calcium</keyword>
<keyword id="KW-0349">Heme</keyword>
<keyword id="KW-0376">Hydrogen peroxide</keyword>
<keyword id="KW-0408">Iron</keyword>
<keyword id="KW-0472">Membrane</keyword>
<keyword id="KW-0479">Metal-binding</keyword>
<keyword id="KW-0560">Oxidoreductase</keyword>
<keyword id="KW-0575">Peroxidase</keyword>
<keyword id="KW-0576">Peroxisome</keyword>
<keyword id="KW-0630">Potassium</keyword>
<keyword id="KW-1185">Reference proteome</keyword>
<keyword id="KW-0809">Transit peptide</keyword>
<keyword id="KW-0812">Transmembrane</keyword>
<keyword id="KW-1133">Transmembrane helix</keyword>
<evidence type="ECO:0000250" key="1"/>
<evidence type="ECO:0000255" key="2"/>
<evidence type="ECO:0000255" key="3">
    <source>
        <dbReference type="PROSITE-ProRule" id="PRU00297"/>
    </source>
</evidence>
<evidence type="ECO:0000255" key="4">
    <source>
        <dbReference type="PROSITE-ProRule" id="PRU10012"/>
    </source>
</evidence>
<evidence type="ECO:0000256" key="5">
    <source>
        <dbReference type="SAM" id="MobiDB-lite"/>
    </source>
</evidence>
<evidence type="ECO:0000269" key="6">
    <source>
    </source>
</evidence>
<evidence type="ECO:0000305" key="7"/>
<organism>
    <name type="scientific">Arabidopsis thaliana</name>
    <name type="common">Mouse-ear cress</name>
    <dbReference type="NCBI Taxonomy" id="3702"/>
    <lineage>
        <taxon>Eukaryota</taxon>
        <taxon>Viridiplantae</taxon>
        <taxon>Streptophyta</taxon>
        <taxon>Embryophyta</taxon>
        <taxon>Tracheophyta</taxon>
        <taxon>Spermatophyta</taxon>
        <taxon>Magnoliopsida</taxon>
        <taxon>eudicotyledons</taxon>
        <taxon>Gunneridae</taxon>
        <taxon>Pentapetalae</taxon>
        <taxon>rosids</taxon>
        <taxon>malvids</taxon>
        <taxon>Brassicales</taxon>
        <taxon>Brassicaceae</taxon>
        <taxon>Camelineae</taxon>
        <taxon>Arabidopsis</taxon>
    </lineage>
</organism>
<sequence>MAVNVDAEYLKEIEKTRRDLRALISSRNCAPIMLRLAWHDAGTYDAKKKTGGANGSIRFKEELNRPHNKGLEKAVAFCEEVKAKHPRVSYADLYQLAGVVAVEVTGGPAIPFTPGRKDADSADDGELPNPNEGASHLRTLFSRMGLLDRDIVALSGGHTLGRAHKERSDFEGPWTQDPLKFDNSYFVELLKGETPGLLQLKTDKALLDDPKFHPFVKLYAKDEDMFFKAYAISHKKLSELGFNPPRRIPSAVTQQTLGIAVAAAVVIFTICYEASRRGK</sequence>
<reference key="1">
    <citation type="journal article" date="1999" name="Nature">
        <title>Sequence and analysis of chromosome 4 of the plant Arabidopsis thaliana.</title>
        <authorList>
            <person name="Mayer K.F.X."/>
            <person name="Schueller C."/>
            <person name="Wambutt R."/>
            <person name="Murphy G."/>
            <person name="Volckaert G."/>
            <person name="Pohl T."/>
            <person name="Duesterhoeft A."/>
            <person name="Stiekema W."/>
            <person name="Entian K.-D."/>
            <person name="Terryn N."/>
            <person name="Harris B."/>
            <person name="Ansorge W."/>
            <person name="Brandt P."/>
            <person name="Grivell L.A."/>
            <person name="Rieger M."/>
            <person name="Weichselgartner M."/>
            <person name="de Simone V."/>
            <person name="Obermaier B."/>
            <person name="Mache R."/>
            <person name="Mueller M."/>
            <person name="Kreis M."/>
            <person name="Delseny M."/>
            <person name="Puigdomenech P."/>
            <person name="Watson M."/>
            <person name="Schmidtheini T."/>
            <person name="Reichert B."/>
            <person name="Portetelle D."/>
            <person name="Perez-Alonso M."/>
            <person name="Boutry M."/>
            <person name="Bancroft I."/>
            <person name="Vos P."/>
            <person name="Hoheisel J."/>
            <person name="Zimmermann W."/>
            <person name="Wedler H."/>
            <person name="Ridley P."/>
            <person name="Langham S.-A."/>
            <person name="McCullagh B."/>
            <person name="Bilham L."/>
            <person name="Robben J."/>
            <person name="van der Schueren J."/>
            <person name="Grymonprez B."/>
            <person name="Chuang Y.-J."/>
            <person name="Vandenbussche F."/>
            <person name="Braeken M."/>
            <person name="Weltjens I."/>
            <person name="Voet M."/>
            <person name="Bastiaens I."/>
            <person name="Aert R."/>
            <person name="Defoor E."/>
            <person name="Weitzenegger T."/>
            <person name="Bothe G."/>
            <person name="Ramsperger U."/>
            <person name="Hilbert H."/>
            <person name="Braun M."/>
            <person name="Holzer E."/>
            <person name="Brandt A."/>
            <person name="Peters S."/>
            <person name="van Staveren M."/>
            <person name="Dirkse W."/>
            <person name="Mooijman P."/>
            <person name="Klein Lankhorst R."/>
            <person name="Rose M."/>
            <person name="Hauf J."/>
            <person name="Koetter P."/>
            <person name="Berneiser S."/>
            <person name="Hempel S."/>
            <person name="Feldpausch M."/>
            <person name="Lamberth S."/>
            <person name="Van den Daele H."/>
            <person name="De Keyser A."/>
            <person name="Buysshaert C."/>
            <person name="Gielen J."/>
            <person name="Villarroel R."/>
            <person name="De Clercq R."/>
            <person name="van Montagu M."/>
            <person name="Rogers J."/>
            <person name="Cronin A."/>
            <person name="Quail M.A."/>
            <person name="Bray-Allen S."/>
            <person name="Clark L."/>
            <person name="Doggett J."/>
            <person name="Hall S."/>
            <person name="Kay M."/>
            <person name="Lennard N."/>
            <person name="McLay K."/>
            <person name="Mayes R."/>
            <person name="Pettett A."/>
            <person name="Rajandream M.A."/>
            <person name="Lyne M."/>
            <person name="Benes V."/>
            <person name="Rechmann S."/>
            <person name="Borkova D."/>
            <person name="Bloecker H."/>
            <person name="Scharfe M."/>
            <person name="Grimm M."/>
            <person name="Loehnert T.-H."/>
            <person name="Dose S."/>
            <person name="de Haan M."/>
            <person name="Maarse A.C."/>
            <person name="Schaefer M."/>
            <person name="Mueller-Auer S."/>
            <person name="Gabel C."/>
            <person name="Fuchs M."/>
            <person name="Fartmann B."/>
            <person name="Granderath K."/>
            <person name="Dauner D."/>
            <person name="Herzl A."/>
            <person name="Neumann S."/>
            <person name="Argiriou A."/>
            <person name="Vitale D."/>
            <person name="Liguori R."/>
            <person name="Piravandi E."/>
            <person name="Massenet O."/>
            <person name="Quigley F."/>
            <person name="Clabauld G."/>
            <person name="Muendlein A."/>
            <person name="Felber R."/>
            <person name="Schnabl S."/>
            <person name="Hiller R."/>
            <person name="Schmidt W."/>
            <person name="Lecharny A."/>
            <person name="Aubourg S."/>
            <person name="Chefdor F."/>
            <person name="Cooke R."/>
            <person name="Berger C."/>
            <person name="Monfort A."/>
            <person name="Casacuberta E."/>
            <person name="Gibbons T."/>
            <person name="Weber N."/>
            <person name="Vandenbol M."/>
            <person name="Bargues M."/>
            <person name="Terol J."/>
            <person name="Torres A."/>
            <person name="Perez-Perez A."/>
            <person name="Purnelle B."/>
            <person name="Bent E."/>
            <person name="Johnson S."/>
            <person name="Tacon D."/>
            <person name="Jesse T."/>
            <person name="Heijnen L."/>
            <person name="Schwarz S."/>
            <person name="Scholler P."/>
            <person name="Heber S."/>
            <person name="Francs P."/>
            <person name="Bielke C."/>
            <person name="Frishman D."/>
            <person name="Haase D."/>
            <person name="Lemcke K."/>
            <person name="Mewes H.-W."/>
            <person name="Stocker S."/>
            <person name="Zaccaria P."/>
            <person name="Bevan M."/>
            <person name="Wilson R.K."/>
            <person name="de la Bastide M."/>
            <person name="Habermann K."/>
            <person name="Parnell L."/>
            <person name="Dedhia N."/>
            <person name="Gnoj L."/>
            <person name="Schutz K."/>
            <person name="Huang E."/>
            <person name="Spiegel L."/>
            <person name="Sekhon M."/>
            <person name="Murray J."/>
            <person name="Sheet P."/>
            <person name="Cordes M."/>
            <person name="Abu-Threideh J."/>
            <person name="Stoneking T."/>
            <person name="Kalicki J."/>
            <person name="Graves T."/>
            <person name="Harmon G."/>
            <person name="Edwards J."/>
            <person name="Latreille P."/>
            <person name="Courtney L."/>
            <person name="Cloud J."/>
            <person name="Abbott A."/>
            <person name="Scott K."/>
            <person name="Johnson D."/>
            <person name="Minx P."/>
            <person name="Bentley D."/>
            <person name="Fulton B."/>
            <person name="Miller N."/>
            <person name="Greco T."/>
            <person name="Kemp K."/>
            <person name="Kramer J."/>
            <person name="Fulton L."/>
            <person name="Mardis E."/>
            <person name="Dante M."/>
            <person name="Pepin K."/>
            <person name="Hillier L.W."/>
            <person name="Nelson J."/>
            <person name="Spieth J."/>
            <person name="Ryan E."/>
            <person name="Andrews S."/>
            <person name="Geisel C."/>
            <person name="Layman D."/>
            <person name="Du H."/>
            <person name="Ali J."/>
            <person name="Berghoff A."/>
            <person name="Jones K."/>
            <person name="Drone K."/>
            <person name="Cotton M."/>
            <person name="Joshu C."/>
            <person name="Antonoiu B."/>
            <person name="Zidanic M."/>
            <person name="Strong C."/>
            <person name="Sun H."/>
            <person name="Lamar B."/>
            <person name="Yordan C."/>
            <person name="Ma P."/>
            <person name="Zhong J."/>
            <person name="Preston R."/>
            <person name="Vil D."/>
            <person name="Shekher M."/>
            <person name="Matero A."/>
            <person name="Shah R."/>
            <person name="Swaby I.K."/>
            <person name="O'Shaughnessy A."/>
            <person name="Rodriguez M."/>
            <person name="Hoffman J."/>
            <person name="Till S."/>
            <person name="Granat S."/>
            <person name="Shohdy N."/>
            <person name="Hasegawa A."/>
            <person name="Hameed A."/>
            <person name="Lodhi M."/>
            <person name="Johnson A."/>
            <person name="Chen E."/>
            <person name="Marra M.A."/>
            <person name="Martienssen R."/>
            <person name="McCombie W.R."/>
        </authorList>
    </citation>
    <scope>NUCLEOTIDE SEQUENCE [LARGE SCALE GENOMIC DNA]</scope>
    <source>
        <strain>cv. Columbia</strain>
    </source>
</reference>
<reference key="2">
    <citation type="journal article" date="2017" name="Plant J.">
        <title>Araport11: a complete reannotation of the Arabidopsis thaliana reference genome.</title>
        <authorList>
            <person name="Cheng C.Y."/>
            <person name="Krishnakumar V."/>
            <person name="Chan A.P."/>
            <person name="Thibaud-Nissen F."/>
            <person name="Schobel S."/>
            <person name="Town C.D."/>
        </authorList>
    </citation>
    <scope>GENOME REANNOTATION</scope>
    <source>
        <strain>cv. Columbia</strain>
    </source>
</reference>
<reference key="3">
    <citation type="journal article" date="2002" name="Science">
        <title>Functional annotation of a full-length Arabidopsis cDNA collection.</title>
        <authorList>
            <person name="Seki M."/>
            <person name="Narusaka M."/>
            <person name="Kamiya A."/>
            <person name="Ishida J."/>
            <person name="Satou M."/>
            <person name="Sakurai T."/>
            <person name="Nakajima M."/>
            <person name="Enju A."/>
            <person name="Akiyama K."/>
            <person name="Oono Y."/>
            <person name="Muramatsu M."/>
            <person name="Hayashizaki Y."/>
            <person name="Kawai J."/>
            <person name="Carninci P."/>
            <person name="Itoh M."/>
            <person name="Ishii Y."/>
            <person name="Arakawa T."/>
            <person name="Shibata K."/>
            <person name="Shinagawa A."/>
            <person name="Shinozaki K."/>
        </authorList>
    </citation>
    <scope>NUCLEOTIDE SEQUENCE [LARGE SCALE MRNA]</scope>
    <source>
        <strain>cv. Columbia</strain>
    </source>
</reference>
<reference key="4">
    <citation type="journal article" date="2003" name="Science">
        <title>Empirical analysis of transcriptional activity in the Arabidopsis genome.</title>
        <authorList>
            <person name="Yamada K."/>
            <person name="Lim J."/>
            <person name="Dale J.M."/>
            <person name="Chen H."/>
            <person name="Shinn P."/>
            <person name="Palm C.J."/>
            <person name="Southwick A.M."/>
            <person name="Wu H.C."/>
            <person name="Kim C.J."/>
            <person name="Nguyen M."/>
            <person name="Pham P.K."/>
            <person name="Cheuk R.F."/>
            <person name="Karlin-Newmann G."/>
            <person name="Liu S.X."/>
            <person name="Lam B."/>
            <person name="Sakano H."/>
            <person name="Wu T."/>
            <person name="Yu G."/>
            <person name="Miranda M."/>
            <person name="Quach H.L."/>
            <person name="Tripp M."/>
            <person name="Chang C.H."/>
            <person name="Lee J.M."/>
            <person name="Toriumi M.J."/>
            <person name="Chan M.M."/>
            <person name="Tang C.C."/>
            <person name="Onodera C.S."/>
            <person name="Deng J.M."/>
            <person name="Akiyama K."/>
            <person name="Ansari Y."/>
            <person name="Arakawa T."/>
            <person name="Banh J."/>
            <person name="Banno F."/>
            <person name="Bowser L."/>
            <person name="Brooks S.Y."/>
            <person name="Carninci P."/>
            <person name="Chao Q."/>
            <person name="Choy N."/>
            <person name="Enju A."/>
            <person name="Goldsmith A.D."/>
            <person name="Gurjal M."/>
            <person name="Hansen N.F."/>
            <person name="Hayashizaki Y."/>
            <person name="Johnson-Hopson C."/>
            <person name="Hsuan V.W."/>
            <person name="Iida K."/>
            <person name="Karnes M."/>
            <person name="Khan S."/>
            <person name="Koesema E."/>
            <person name="Ishida J."/>
            <person name="Jiang P.X."/>
            <person name="Jones T."/>
            <person name="Kawai J."/>
            <person name="Kamiya A."/>
            <person name="Meyers C."/>
            <person name="Nakajima M."/>
            <person name="Narusaka M."/>
            <person name="Seki M."/>
            <person name="Sakurai T."/>
            <person name="Satou M."/>
            <person name="Tamse R."/>
            <person name="Vaysberg M."/>
            <person name="Wallender E.K."/>
            <person name="Wong C."/>
            <person name="Yamamura Y."/>
            <person name="Yuan S."/>
            <person name="Shinozaki K."/>
            <person name="Davis R.W."/>
            <person name="Theologis A."/>
            <person name="Ecker J.R."/>
        </authorList>
    </citation>
    <scope>NUCLEOTIDE SEQUENCE [LARGE SCALE MRNA]</scope>
    <source>
        <strain>cv. Columbia</strain>
    </source>
</reference>
<reference key="5">
    <citation type="journal article" date="2002" name="Plant Physiol.">
        <title>Heat stress- and heat shock transcription factor-dependent expression and activity of ascorbate peroxidase in Arabidopsis.</title>
        <authorList>
            <person name="Panchuk I.I."/>
            <person name="Volkov R.A."/>
            <person name="Schoffl F."/>
        </authorList>
    </citation>
    <scope>NUCLEOTIDE SEQUENCE [MRNA] OF 19-279</scope>
    <source>
        <strain>cv. Columbia</strain>
    </source>
</reference>
<reference key="6">
    <citation type="journal article" date="2010" name="Plant Cell">
        <title>ANKYRIN REPEAT-CONTAINING PROTEIN 2A is an essential molecular chaperone for peroxisomal membrane-bound ASCORBATE PEROXIDASE3 in Arabidopsis.</title>
        <authorList>
            <person name="Shen G."/>
            <person name="Kuppu S."/>
            <person name="Venkataramani S."/>
            <person name="Wang J."/>
            <person name="Yan J."/>
            <person name="Qiu X."/>
            <person name="Zhang H."/>
        </authorList>
    </citation>
    <scope>INTERACTION WITH AKR2A AND AKR2B</scope>
    <source>
        <strain>cv. C24</strain>
        <strain>cv. Columbia</strain>
    </source>
</reference>
<reference key="7">
    <citation type="journal article" date="2010" name="Plant Signal. Behav.">
        <title>Is AKR2A an essential molecular chaperone for a class of membrane-bound proteins in plants?</title>
        <authorList>
            <person name="Zhang H."/>
            <person name="Li X."/>
            <person name="Zhang Y."/>
            <person name="Kuppu S."/>
            <person name="Shen G."/>
        </authorList>
    </citation>
    <scope>AKR2A-BINDING SEQUENCE</scope>
    <scope>REVIEW</scope>
</reference>
<protein>
    <recommendedName>
        <fullName>L-ascorbate peroxidase 5, peroxisomal</fullName>
        <shortName>AtAPx04</shortName>
        <ecNumber>1.11.1.11</ecNumber>
    </recommendedName>
</protein>